<evidence type="ECO:0000255" key="1">
    <source>
        <dbReference type="HAMAP-Rule" id="MF_00082"/>
    </source>
</evidence>
<name>ARGB_PROMA</name>
<sequence>MKSNNLATEGINSLPLDHGENDAIRVSVLSEALPYIQKFAGRRIVIKYGGSAMSKESLKEAVFRDIALLSSVGAQPVIIHGGGPEINHWLTKLEIKSEFRDGLRITDSNTMDIVEMVLIGRVNKQIVNGINKVGASAVGLCGIDGKLIEARPWGDGSYGLVGEVARVNADVIEPLIANGYIPVISSVASSVEGINYNINADTVAGEIAAAIGAEKLILLTDTSGILKNKSDPLSLIQNIRLSDMRELIDKEVVNGGMTPKAECCIRALAQGVNAAHIIDGRIPHALLLEVFTDKGIGTMIVSRS</sequence>
<reference key="1">
    <citation type="journal article" date="2003" name="Proc. Natl. Acad. Sci. U.S.A.">
        <title>Genome sequence of the cyanobacterium Prochlorococcus marinus SS120, a nearly minimal oxyphototrophic genome.</title>
        <authorList>
            <person name="Dufresne A."/>
            <person name="Salanoubat M."/>
            <person name="Partensky F."/>
            <person name="Artiguenave F."/>
            <person name="Axmann I.M."/>
            <person name="Barbe V."/>
            <person name="Duprat S."/>
            <person name="Galperin M.Y."/>
            <person name="Koonin E.V."/>
            <person name="Le Gall F."/>
            <person name="Makarova K.S."/>
            <person name="Ostrowski M."/>
            <person name="Oztas S."/>
            <person name="Robert C."/>
            <person name="Rogozin I.B."/>
            <person name="Scanlan D.J."/>
            <person name="Tandeau de Marsac N."/>
            <person name="Weissenbach J."/>
            <person name="Wincker P."/>
            <person name="Wolf Y.I."/>
            <person name="Hess W.R."/>
        </authorList>
    </citation>
    <scope>NUCLEOTIDE SEQUENCE [LARGE SCALE GENOMIC DNA]</scope>
    <source>
        <strain>SARG / CCMP1375 / SS120</strain>
    </source>
</reference>
<comment type="function">
    <text evidence="1">Catalyzes the ATP-dependent phosphorylation of N-acetyl-L-glutamate.</text>
</comment>
<comment type="catalytic activity">
    <reaction evidence="1">
        <text>N-acetyl-L-glutamate + ATP = N-acetyl-L-glutamyl 5-phosphate + ADP</text>
        <dbReference type="Rhea" id="RHEA:14629"/>
        <dbReference type="ChEBI" id="CHEBI:30616"/>
        <dbReference type="ChEBI" id="CHEBI:44337"/>
        <dbReference type="ChEBI" id="CHEBI:57936"/>
        <dbReference type="ChEBI" id="CHEBI:456216"/>
        <dbReference type="EC" id="2.7.2.8"/>
    </reaction>
</comment>
<comment type="pathway">
    <text evidence="1">Amino-acid biosynthesis; L-arginine biosynthesis; N(2)-acetyl-L-ornithine from L-glutamate: step 2/4.</text>
</comment>
<comment type="subcellular location">
    <subcellularLocation>
        <location evidence="1">Cytoplasm</location>
    </subcellularLocation>
</comment>
<comment type="similarity">
    <text evidence="1">Belongs to the acetylglutamate kinase family. ArgB subfamily.</text>
</comment>
<gene>
    <name evidence="1" type="primary">argB</name>
    <name type="ordered locus">Pro_0499</name>
</gene>
<organism>
    <name type="scientific">Prochlorococcus marinus (strain SARG / CCMP1375 / SS120)</name>
    <dbReference type="NCBI Taxonomy" id="167539"/>
    <lineage>
        <taxon>Bacteria</taxon>
        <taxon>Bacillati</taxon>
        <taxon>Cyanobacteriota</taxon>
        <taxon>Cyanophyceae</taxon>
        <taxon>Synechococcales</taxon>
        <taxon>Prochlorococcaceae</taxon>
        <taxon>Prochlorococcus</taxon>
    </lineage>
</organism>
<feature type="chain" id="PRO_0000112647" description="Acetylglutamate kinase">
    <location>
        <begin position="1"/>
        <end position="304"/>
    </location>
</feature>
<feature type="binding site" evidence="1">
    <location>
        <begin position="82"/>
        <end position="83"/>
    </location>
    <ligand>
        <name>substrate</name>
    </ligand>
</feature>
<feature type="binding site" evidence="1">
    <location>
        <position position="104"/>
    </location>
    <ligand>
        <name>substrate</name>
    </ligand>
</feature>
<feature type="binding site" evidence="1">
    <location>
        <position position="197"/>
    </location>
    <ligand>
        <name>substrate</name>
    </ligand>
</feature>
<feature type="site" description="Transition state stabilizer" evidence="1">
    <location>
        <position position="47"/>
    </location>
</feature>
<feature type="site" description="Transition state stabilizer" evidence="1">
    <location>
        <position position="260"/>
    </location>
</feature>
<protein>
    <recommendedName>
        <fullName evidence="1">Acetylglutamate kinase</fullName>
        <ecNumber evidence="1">2.7.2.8</ecNumber>
    </recommendedName>
    <alternativeName>
        <fullName evidence="1">N-acetyl-L-glutamate 5-phosphotransferase</fullName>
    </alternativeName>
    <alternativeName>
        <fullName evidence="1">NAG kinase</fullName>
        <shortName evidence="1">NAGK</shortName>
    </alternativeName>
</protein>
<accession>Q7VD84</accession>
<keyword id="KW-0028">Amino-acid biosynthesis</keyword>
<keyword id="KW-0055">Arginine biosynthesis</keyword>
<keyword id="KW-0067">ATP-binding</keyword>
<keyword id="KW-0963">Cytoplasm</keyword>
<keyword id="KW-0418">Kinase</keyword>
<keyword id="KW-0547">Nucleotide-binding</keyword>
<keyword id="KW-1185">Reference proteome</keyword>
<keyword id="KW-0808">Transferase</keyword>
<proteinExistence type="inferred from homology"/>
<dbReference type="EC" id="2.7.2.8" evidence="1"/>
<dbReference type="EMBL" id="AE017126">
    <property type="protein sequence ID" value="AAP99544.1"/>
    <property type="molecule type" value="Genomic_DNA"/>
</dbReference>
<dbReference type="RefSeq" id="NP_874892.1">
    <property type="nucleotide sequence ID" value="NC_005042.1"/>
</dbReference>
<dbReference type="RefSeq" id="WP_011124653.1">
    <property type="nucleotide sequence ID" value="NC_005042.1"/>
</dbReference>
<dbReference type="SMR" id="Q7VD84"/>
<dbReference type="STRING" id="167539.Pro_0499"/>
<dbReference type="EnsemblBacteria" id="AAP99544">
    <property type="protein sequence ID" value="AAP99544"/>
    <property type="gene ID" value="Pro_0499"/>
</dbReference>
<dbReference type="KEGG" id="pma:Pro_0499"/>
<dbReference type="PATRIC" id="fig|167539.5.peg.512"/>
<dbReference type="eggNOG" id="COG0548">
    <property type="taxonomic scope" value="Bacteria"/>
</dbReference>
<dbReference type="HOGENOM" id="CLU_053680_0_0_3"/>
<dbReference type="OrthoDB" id="9803155at2"/>
<dbReference type="UniPathway" id="UPA00068">
    <property type="reaction ID" value="UER00107"/>
</dbReference>
<dbReference type="Proteomes" id="UP000001420">
    <property type="component" value="Chromosome"/>
</dbReference>
<dbReference type="GO" id="GO:0005737">
    <property type="term" value="C:cytoplasm"/>
    <property type="evidence" value="ECO:0007669"/>
    <property type="project" value="UniProtKB-SubCell"/>
</dbReference>
<dbReference type="GO" id="GO:0003991">
    <property type="term" value="F:acetylglutamate kinase activity"/>
    <property type="evidence" value="ECO:0007669"/>
    <property type="project" value="UniProtKB-UniRule"/>
</dbReference>
<dbReference type="GO" id="GO:0005524">
    <property type="term" value="F:ATP binding"/>
    <property type="evidence" value="ECO:0007669"/>
    <property type="project" value="UniProtKB-UniRule"/>
</dbReference>
<dbReference type="GO" id="GO:0042450">
    <property type="term" value="P:arginine biosynthetic process via ornithine"/>
    <property type="evidence" value="ECO:0007669"/>
    <property type="project" value="UniProtKB-UniRule"/>
</dbReference>
<dbReference type="GO" id="GO:0006526">
    <property type="term" value="P:L-arginine biosynthetic process"/>
    <property type="evidence" value="ECO:0007669"/>
    <property type="project" value="UniProtKB-UniPathway"/>
</dbReference>
<dbReference type="CDD" id="cd04250">
    <property type="entry name" value="AAK_NAGK-C"/>
    <property type="match status" value="1"/>
</dbReference>
<dbReference type="FunFam" id="3.40.1160.10:FF:000004">
    <property type="entry name" value="Acetylglutamate kinase"/>
    <property type="match status" value="1"/>
</dbReference>
<dbReference type="Gene3D" id="3.40.1160.10">
    <property type="entry name" value="Acetylglutamate kinase-like"/>
    <property type="match status" value="1"/>
</dbReference>
<dbReference type="HAMAP" id="MF_00082">
    <property type="entry name" value="ArgB"/>
    <property type="match status" value="1"/>
</dbReference>
<dbReference type="InterPro" id="IPR036393">
    <property type="entry name" value="AceGlu_kinase-like_sf"/>
</dbReference>
<dbReference type="InterPro" id="IPR004662">
    <property type="entry name" value="AcgluKinase_fam"/>
</dbReference>
<dbReference type="InterPro" id="IPR037528">
    <property type="entry name" value="ArgB"/>
</dbReference>
<dbReference type="InterPro" id="IPR001048">
    <property type="entry name" value="Asp/Glu/Uridylate_kinase"/>
</dbReference>
<dbReference type="InterPro" id="IPR001057">
    <property type="entry name" value="Glu/AcGlu_kinase"/>
</dbReference>
<dbReference type="InterPro" id="IPR041727">
    <property type="entry name" value="NAGK-C"/>
</dbReference>
<dbReference type="NCBIfam" id="TIGR00761">
    <property type="entry name" value="argB"/>
    <property type="match status" value="1"/>
</dbReference>
<dbReference type="PANTHER" id="PTHR23342">
    <property type="entry name" value="N-ACETYLGLUTAMATE SYNTHASE"/>
    <property type="match status" value="1"/>
</dbReference>
<dbReference type="PANTHER" id="PTHR23342:SF0">
    <property type="entry name" value="N-ACETYLGLUTAMATE SYNTHASE, MITOCHONDRIAL"/>
    <property type="match status" value="1"/>
</dbReference>
<dbReference type="Pfam" id="PF00696">
    <property type="entry name" value="AA_kinase"/>
    <property type="match status" value="1"/>
</dbReference>
<dbReference type="PIRSF" id="PIRSF000728">
    <property type="entry name" value="NAGK"/>
    <property type="match status" value="1"/>
</dbReference>
<dbReference type="PRINTS" id="PR00474">
    <property type="entry name" value="GLU5KINASE"/>
</dbReference>
<dbReference type="SUPFAM" id="SSF53633">
    <property type="entry name" value="Carbamate kinase-like"/>
    <property type="match status" value="1"/>
</dbReference>